<organism>
    <name type="scientific">Chromobacterium violaceum (strain ATCC 12472 / DSM 30191 / JCM 1249 / CCUG 213 / NBRC 12614 / NCIMB 9131 / NCTC 9757 / MK)</name>
    <dbReference type="NCBI Taxonomy" id="243365"/>
    <lineage>
        <taxon>Bacteria</taxon>
        <taxon>Pseudomonadati</taxon>
        <taxon>Pseudomonadota</taxon>
        <taxon>Betaproteobacteria</taxon>
        <taxon>Neisseriales</taxon>
        <taxon>Chromobacteriaceae</taxon>
        <taxon>Chromobacterium</taxon>
    </lineage>
</organism>
<dbReference type="EMBL" id="AE016825">
    <property type="protein sequence ID" value="AAQ61358.1"/>
    <property type="molecule type" value="Genomic_DNA"/>
</dbReference>
<dbReference type="RefSeq" id="WP_011137243.1">
    <property type="nucleotide sequence ID" value="NC_005085.1"/>
</dbReference>
<dbReference type="SMR" id="Q7NRT4"/>
<dbReference type="STRING" id="243365.CV_3696"/>
<dbReference type="GeneID" id="66364929"/>
<dbReference type="KEGG" id="cvi:CV_3696"/>
<dbReference type="eggNOG" id="COG0103">
    <property type="taxonomic scope" value="Bacteria"/>
</dbReference>
<dbReference type="HOGENOM" id="CLU_046483_2_1_4"/>
<dbReference type="OrthoDB" id="9803965at2"/>
<dbReference type="Proteomes" id="UP000001424">
    <property type="component" value="Chromosome"/>
</dbReference>
<dbReference type="GO" id="GO:0022627">
    <property type="term" value="C:cytosolic small ribosomal subunit"/>
    <property type="evidence" value="ECO:0007669"/>
    <property type="project" value="TreeGrafter"/>
</dbReference>
<dbReference type="GO" id="GO:0003723">
    <property type="term" value="F:RNA binding"/>
    <property type="evidence" value="ECO:0007669"/>
    <property type="project" value="TreeGrafter"/>
</dbReference>
<dbReference type="GO" id="GO:0003735">
    <property type="term" value="F:structural constituent of ribosome"/>
    <property type="evidence" value="ECO:0007669"/>
    <property type="project" value="InterPro"/>
</dbReference>
<dbReference type="GO" id="GO:0006412">
    <property type="term" value="P:translation"/>
    <property type="evidence" value="ECO:0007669"/>
    <property type="project" value="UniProtKB-UniRule"/>
</dbReference>
<dbReference type="FunFam" id="3.30.230.10:FF:000001">
    <property type="entry name" value="30S ribosomal protein S9"/>
    <property type="match status" value="1"/>
</dbReference>
<dbReference type="Gene3D" id="3.30.230.10">
    <property type="match status" value="1"/>
</dbReference>
<dbReference type="HAMAP" id="MF_00532_B">
    <property type="entry name" value="Ribosomal_uS9_B"/>
    <property type="match status" value="1"/>
</dbReference>
<dbReference type="InterPro" id="IPR020568">
    <property type="entry name" value="Ribosomal_Su5_D2-typ_SF"/>
</dbReference>
<dbReference type="InterPro" id="IPR000754">
    <property type="entry name" value="Ribosomal_uS9"/>
</dbReference>
<dbReference type="InterPro" id="IPR023035">
    <property type="entry name" value="Ribosomal_uS9_bac/plastid"/>
</dbReference>
<dbReference type="InterPro" id="IPR020574">
    <property type="entry name" value="Ribosomal_uS9_CS"/>
</dbReference>
<dbReference type="InterPro" id="IPR014721">
    <property type="entry name" value="Ribsml_uS5_D2-typ_fold_subgr"/>
</dbReference>
<dbReference type="NCBIfam" id="NF001099">
    <property type="entry name" value="PRK00132.1"/>
    <property type="match status" value="1"/>
</dbReference>
<dbReference type="PANTHER" id="PTHR21569">
    <property type="entry name" value="RIBOSOMAL PROTEIN S9"/>
    <property type="match status" value="1"/>
</dbReference>
<dbReference type="PANTHER" id="PTHR21569:SF1">
    <property type="entry name" value="SMALL RIBOSOMAL SUBUNIT PROTEIN US9M"/>
    <property type="match status" value="1"/>
</dbReference>
<dbReference type="Pfam" id="PF00380">
    <property type="entry name" value="Ribosomal_S9"/>
    <property type="match status" value="1"/>
</dbReference>
<dbReference type="SUPFAM" id="SSF54211">
    <property type="entry name" value="Ribosomal protein S5 domain 2-like"/>
    <property type="match status" value="1"/>
</dbReference>
<dbReference type="PROSITE" id="PS00360">
    <property type="entry name" value="RIBOSOMAL_S9"/>
    <property type="match status" value="1"/>
</dbReference>
<evidence type="ECO:0000255" key="1">
    <source>
        <dbReference type="HAMAP-Rule" id="MF_00532"/>
    </source>
</evidence>
<evidence type="ECO:0000305" key="2"/>
<reference key="1">
    <citation type="journal article" date="2003" name="Proc. Natl. Acad. Sci. U.S.A.">
        <title>The complete genome sequence of Chromobacterium violaceum reveals remarkable and exploitable bacterial adaptability.</title>
        <authorList>
            <person name="Vasconcelos A.T.R."/>
            <person name="de Almeida D.F."/>
            <person name="Hungria M."/>
            <person name="Guimaraes C.T."/>
            <person name="Antonio R.V."/>
            <person name="Almeida F.C."/>
            <person name="de Almeida L.G.P."/>
            <person name="de Almeida R."/>
            <person name="Alves-Gomes J.A."/>
            <person name="Andrade E.M."/>
            <person name="Araripe J."/>
            <person name="de Araujo M.F.F."/>
            <person name="Astolfi-Filho S."/>
            <person name="Azevedo V."/>
            <person name="Baptista A.J."/>
            <person name="Bataus L.A.M."/>
            <person name="Batista J.S."/>
            <person name="Belo A."/>
            <person name="van den Berg C."/>
            <person name="Bogo M."/>
            <person name="Bonatto S."/>
            <person name="Bordignon J."/>
            <person name="Brigido M.M."/>
            <person name="Brito C.A."/>
            <person name="Brocchi M."/>
            <person name="Burity H.A."/>
            <person name="Camargo A.A."/>
            <person name="Cardoso D.D.P."/>
            <person name="Carneiro N.P."/>
            <person name="Carraro D.M."/>
            <person name="Carvalho C.M.B."/>
            <person name="Cascardo J.C.M."/>
            <person name="Cavada B.S."/>
            <person name="Chueire L.M.O."/>
            <person name="Creczynski-Pasa T.B."/>
            <person name="Cunha-Junior N.C."/>
            <person name="Fagundes N."/>
            <person name="Falcao C.L."/>
            <person name="Fantinatti F."/>
            <person name="Farias I.P."/>
            <person name="Felipe M.S.S."/>
            <person name="Ferrari L.P."/>
            <person name="Ferro J.A."/>
            <person name="Ferro M.I.T."/>
            <person name="Franco G.R."/>
            <person name="Freitas N.S.A."/>
            <person name="Furlan L.R."/>
            <person name="Gazzinelli R.T."/>
            <person name="Gomes E.A."/>
            <person name="Goncalves P.R."/>
            <person name="Grangeiro T.B."/>
            <person name="Grattapaglia D."/>
            <person name="Grisard E.C."/>
            <person name="Hanna E.S."/>
            <person name="Jardim S.N."/>
            <person name="Laurino J."/>
            <person name="Leoi L.C.T."/>
            <person name="Lima L.F.A."/>
            <person name="Loureiro M.F."/>
            <person name="Lyra M.C.C.P."/>
            <person name="Madeira H.M.F."/>
            <person name="Manfio G.P."/>
            <person name="Maranhao A.Q."/>
            <person name="Martins W.S."/>
            <person name="di Mauro S.M.Z."/>
            <person name="de Medeiros S.R.B."/>
            <person name="Meissner R.V."/>
            <person name="Moreira M.A.M."/>
            <person name="Nascimento F.F."/>
            <person name="Nicolas M.F."/>
            <person name="Oliveira J.G."/>
            <person name="Oliveira S.C."/>
            <person name="Paixao R.F.C."/>
            <person name="Parente J.A."/>
            <person name="Pedrosa F.O."/>
            <person name="Pena S.D.J."/>
            <person name="Pereira J.O."/>
            <person name="Pereira M."/>
            <person name="Pinto L.S.R.C."/>
            <person name="Pinto L.S."/>
            <person name="Porto J.I.R."/>
            <person name="Potrich D.P."/>
            <person name="Ramalho-Neto C.E."/>
            <person name="Reis A.M.M."/>
            <person name="Rigo L.U."/>
            <person name="Rondinelli E."/>
            <person name="Santos E.B.P."/>
            <person name="Santos F.R."/>
            <person name="Schneider M.P.C."/>
            <person name="Seuanez H.N."/>
            <person name="Silva A.M.R."/>
            <person name="da Silva A.L.C."/>
            <person name="Silva D.W."/>
            <person name="Silva R."/>
            <person name="Simoes I.C."/>
            <person name="Simon D."/>
            <person name="Soares C.M.A."/>
            <person name="Soares R.B.A."/>
            <person name="Souza E.M."/>
            <person name="Souza K.R.L."/>
            <person name="Souza R.C."/>
            <person name="Steffens M.B.R."/>
            <person name="Steindel M."/>
            <person name="Teixeira S.R."/>
            <person name="Urmenyi T."/>
            <person name="Vettore A."/>
            <person name="Wassem R."/>
            <person name="Zaha A."/>
            <person name="Simpson A.J.G."/>
        </authorList>
    </citation>
    <scope>NUCLEOTIDE SEQUENCE [LARGE SCALE GENOMIC DNA]</scope>
    <source>
        <strain>ATCC 12472 / DSM 30191 / JCM 1249 / CCUG 213 / NBRC 12614 / NCIMB 9131 / NCTC 9757 / MK</strain>
    </source>
</reference>
<protein>
    <recommendedName>
        <fullName evidence="1">Small ribosomal subunit protein uS9</fullName>
    </recommendedName>
    <alternativeName>
        <fullName evidence="2">30S ribosomal protein S9</fullName>
    </alternativeName>
</protein>
<feature type="chain" id="PRO_0000111346" description="Small ribosomal subunit protein uS9">
    <location>
        <begin position="1"/>
        <end position="130"/>
    </location>
</feature>
<comment type="similarity">
    <text evidence="1">Belongs to the universal ribosomal protein uS9 family.</text>
</comment>
<accession>Q7NRT4</accession>
<name>RS9_CHRVO</name>
<proteinExistence type="inferred from homology"/>
<sequence>MNGKYYYGTGRRKSSVARVFMQKGSGQIIVNGKPVDEYFARETGRMVIRQPLALTENLESFDIKVNVVGGGETGQAGAIRHGITRALIDFDAALKSALSAAGYVTRDAREVERKKVGLRKARRAKQFSKR</sequence>
<keyword id="KW-1185">Reference proteome</keyword>
<keyword id="KW-0687">Ribonucleoprotein</keyword>
<keyword id="KW-0689">Ribosomal protein</keyword>
<gene>
    <name evidence="1" type="primary">rpsI</name>
    <name type="ordered locus">CV_3696</name>
</gene>